<organism>
    <name type="scientific">Idiomarina loihiensis (strain ATCC BAA-735 / DSM 15497 / L2-TR)</name>
    <dbReference type="NCBI Taxonomy" id="283942"/>
    <lineage>
        <taxon>Bacteria</taxon>
        <taxon>Pseudomonadati</taxon>
        <taxon>Pseudomonadota</taxon>
        <taxon>Gammaproteobacteria</taxon>
        <taxon>Alteromonadales</taxon>
        <taxon>Idiomarinaceae</taxon>
        <taxon>Idiomarina</taxon>
    </lineage>
</organism>
<name>RS21_IDILO</name>
<keyword id="KW-1185">Reference proteome</keyword>
<keyword id="KW-0687">Ribonucleoprotein</keyword>
<keyword id="KW-0689">Ribosomal protein</keyword>
<proteinExistence type="inferred from homology"/>
<feature type="chain" id="PRO_0000178343" description="Small ribosomal subunit protein bS21">
    <location>
        <begin position="1"/>
        <end position="71"/>
    </location>
</feature>
<feature type="region of interest" description="Disordered" evidence="2">
    <location>
        <begin position="34"/>
        <end position="71"/>
    </location>
</feature>
<feature type="compositionally biased region" description="Basic and acidic residues" evidence="2">
    <location>
        <begin position="34"/>
        <end position="44"/>
    </location>
</feature>
<feature type="compositionally biased region" description="Basic residues" evidence="2">
    <location>
        <begin position="45"/>
        <end position="59"/>
    </location>
</feature>
<feature type="compositionally biased region" description="Basic and acidic residues" evidence="2">
    <location>
        <begin position="60"/>
        <end position="71"/>
    </location>
</feature>
<evidence type="ECO:0000255" key="1">
    <source>
        <dbReference type="HAMAP-Rule" id="MF_00358"/>
    </source>
</evidence>
<evidence type="ECO:0000256" key="2">
    <source>
        <dbReference type="SAM" id="MobiDB-lite"/>
    </source>
</evidence>
<evidence type="ECO:0000305" key="3"/>
<dbReference type="EMBL" id="AE017340">
    <property type="protein sequence ID" value="AAV83034.1"/>
    <property type="molecule type" value="Genomic_DNA"/>
</dbReference>
<dbReference type="RefSeq" id="WP_011235429.1">
    <property type="nucleotide sequence ID" value="NC_006512.1"/>
</dbReference>
<dbReference type="SMR" id="Q5QVL5"/>
<dbReference type="STRING" id="283942.IL2202"/>
<dbReference type="GeneID" id="41337391"/>
<dbReference type="KEGG" id="ilo:IL2202"/>
<dbReference type="eggNOG" id="COG0828">
    <property type="taxonomic scope" value="Bacteria"/>
</dbReference>
<dbReference type="HOGENOM" id="CLU_159258_1_0_6"/>
<dbReference type="OrthoDB" id="9799244at2"/>
<dbReference type="Proteomes" id="UP000001171">
    <property type="component" value="Chromosome"/>
</dbReference>
<dbReference type="GO" id="GO:1990904">
    <property type="term" value="C:ribonucleoprotein complex"/>
    <property type="evidence" value="ECO:0007669"/>
    <property type="project" value="UniProtKB-KW"/>
</dbReference>
<dbReference type="GO" id="GO:0005840">
    <property type="term" value="C:ribosome"/>
    <property type="evidence" value="ECO:0007669"/>
    <property type="project" value="UniProtKB-KW"/>
</dbReference>
<dbReference type="GO" id="GO:0003735">
    <property type="term" value="F:structural constituent of ribosome"/>
    <property type="evidence" value="ECO:0007669"/>
    <property type="project" value="InterPro"/>
</dbReference>
<dbReference type="GO" id="GO:0006412">
    <property type="term" value="P:translation"/>
    <property type="evidence" value="ECO:0007669"/>
    <property type="project" value="UniProtKB-UniRule"/>
</dbReference>
<dbReference type="Gene3D" id="1.20.5.1150">
    <property type="entry name" value="Ribosomal protein S8"/>
    <property type="match status" value="1"/>
</dbReference>
<dbReference type="HAMAP" id="MF_00358">
    <property type="entry name" value="Ribosomal_bS21"/>
    <property type="match status" value="1"/>
</dbReference>
<dbReference type="InterPro" id="IPR001911">
    <property type="entry name" value="Ribosomal_bS21"/>
</dbReference>
<dbReference type="InterPro" id="IPR018278">
    <property type="entry name" value="Ribosomal_bS21_CS"/>
</dbReference>
<dbReference type="InterPro" id="IPR038380">
    <property type="entry name" value="Ribosomal_bS21_sf"/>
</dbReference>
<dbReference type="NCBIfam" id="TIGR00030">
    <property type="entry name" value="S21p"/>
    <property type="match status" value="1"/>
</dbReference>
<dbReference type="PANTHER" id="PTHR21109">
    <property type="entry name" value="MITOCHONDRIAL 28S RIBOSOMAL PROTEIN S21"/>
    <property type="match status" value="1"/>
</dbReference>
<dbReference type="PANTHER" id="PTHR21109:SF22">
    <property type="entry name" value="SMALL RIBOSOMAL SUBUNIT PROTEIN BS21"/>
    <property type="match status" value="1"/>
</dbReference>
<dbReference type="Pfam" id="PF01165">
    <property type="entry name" value="Ribosomal_S21"/>
    <property type="match status" value="1"/>
</dbReference>
<dbReference type="PRINTS" id="PR00976">
    <property type="entry name" value="RIBOSOMALS21"/>
</dbReference>
<dbReference type="PROSITE" id="PS01181">
    <property type="entry name" value="RIBOSOMAL_S21"/>
    <property type="match status" value="1"/>
</dbReference>
<sequence>MPVVKVKENEPFDVALRRFKRSCEKAGVLSEVRRREHYEKPTSERKRKKAAAVKRHAKKLSRDNARRTRLY</sequence>
<comment type="similarity">
    <text evidence="1">Belongs to the bacterial ribosomal protein bS21 family.</text>
</comment>
<reference key="1">
    <citation type="journal article" date="2004" name="Proc. Natl. Acad. Sci. U.S.A.">
        <title>Genome sequence of the deep-sea gamma-proteobacterium Idiomarina loihiensis reveals amino acid fermentation as a source of carbon and energy.</title>
        <authorList>
            <person name="Hou S."/>
            <person name="Saw J.H."/>
            <person name="Lee K.S."/>
            <person name="Freitas T.A."/>
            <person name="Belisle C."/>
            <person name="Kawarabayasi Y."/>
            <person name="Donachie S.P."/>
            <person name="Pikina A."/>
            <person name="Galperin M.Y."/>
            <person name="Koonin E.V."/>
            <person name="Makarova K.S."/>
            <person name="Omelchenko M.V."/>
            <person name="Sorokin A."/>
            <person name="Wolf Y.I."/>
            <person name="Li Q.X."/>
            <person name="Keum Y.S."/>
            <person name="Campbell S."/>
            <person name="Denery J."/>
            <person name="Aizawa S."/>
            <person name="Shibata S."/>
            <person name="Malahoff A."/>
            <person name="Alam M."/>
        </authorList>
    </citation>
    <scope>NUCLEOTIDE SEQUENCE [LARGE SCALE GENOMIC DNA]</scope>
    <source>
        <strain>ATCC BAA-735 / DSM 15497 / L2-TR</strain>
    </source>
</reference>
<protein>
    <recommendedName>
        <fullName evidence="1">Small ribosomal subunit protein bS21</fullName>
    </recommendedName>
    <alternativeName>
        <fullName evidence="3">30S ribosomal protein S21</fullName>
    </alternativeName>
</protein>
<accession>Q5QVL5</accession>
<gene>
    <name evidence="1" type="primary">rpsU</name>
    <name type="ordered locus">IL2202</name>
</gene>